<protein>
    <recommendedName>
        <fullName evidence="1">Probable 5-dehydro-4-deoxyglucarate dehydratase</fullName>
        <ecNumber evidence="1">4.2.1.41</ecNumber>
    </recommendedName>
    <alternativeName>
        <fullName evidence="1">5-keto-4-deoxy-glucarate dehydratase</fullName>
        <shortName evidence="1">KDGDH</shortName>
    </alternativeName>
</protein>
<evidence type="ECO:0000255" key="1">
    <source>
        <dbReference type="HAMAP-Rule" id="MF_00694"/>
    </source>
</evidence>
<dbReference type="EC" id="4.2.1.41" evidence="1"/>
<dbReference type="EMBL" id="CP001341">
    <property type="protein sequence ID" value="ACL38350.1"/>
    <property type="molecule type" value="Genomic_DNA"/>
</dbReference>
<dbReference type="RefSeq" id="WP_015935577.1">
    <property type="nucleotide sequence ID" value="NC_011886.1"/>
</dbReference>
<dbReference type="SMR" id="B8H9W6"/>
<dbReference type="STRING" id="452863.Achl_0351"/>
<dbReference type="KEGG" id="ach:Achl_0351"/>
<dbReference type="eggNOG" id="COG0329">
    <property type="taxonomic scope" value="Bacteria"/>
</dbReference>
<dbReference type="HOGENOM" id="CLU_049343_5_2_11"/>
<dbReference type="OrthoDB" id="8995637at2"/>
<dbReference type="UniPathway" id="UPA00564">
    <property type="reaction ID" value="UER00628"/>
</dbReference>
<dbReference type="Proteomes" id="UP000002505">
    <property type="component" value="Chromosome"/>
</dbReference>
<dbReference type="GO" id="GO:0008840">
    <property type="term" value="F:4-hydroxy-tetrahydrodipicolinate synthase activity"/>
    <property type="evidence" value="ECO:0007669"/>
    <property type="project" value="TreeGrafter"/>
</dbReference>
<dbReference type="GO" id="GO:0047448">
    <property type="term" value="F:5-dehydro-4-deoxyglucarate dehydratase activity"/>
    <property type="evidence" value="ECO:0007669"/>
    <property type="project" value="UniProtKB-UniRule"/>
</dbReference>
<dbReference type="GO" id="GO:0042838">
    <property type="term" value="P:D-glucarate catabolic process"/>
    <property type="evidence" value="ECO:0007669"/>
    <property type="project" value="UniProtKB-UniRule"/>
</dbReference>
<dbReference type="CDD" id="cd00951">
    <property type="entry name" value="KDGDH"/>
    <property type="match status" value="1"/>
</dbReference>
<dbReference type="Gene3D" id="3.20.20.70">
    <property type="entry name" value="Aldolase class I"/>
    <property type="match status" value="1"/>
</dbReference>
<dbReference type="HAMAP" id="MF_00694">
    <property type="entry name" value="KDGDH"/>
    <property type="match status" value="1"/>
</dbReference>
<dbReference type="InterPro" id="IPR013785">
    <property type="entry name" value="Aldolase_TIM"/>
</dbReference>
<dbReference type="InterPro" id="IPR002220">
    <property type="entry name" value="DapA-like"/>
</dbReference>
<dbReference type="InterPro" id="IPR017655">
    <property type="entry name" value="Dehydro-deoxyglucarate_dehyd"/>
</dbReference>
<dbReference type="NCBIfam" id="TIGR03249">
    <property type="entry name" value="KdgD"/>
    <property type="match status" value="1"/>
</dbReference>
<dbReference type="NCBIfam" id="NF002958">
    <property type="entry name" value="PRK03620.1"/>
    <property type="match status" value="1"/>
</dbReference>
<dbReference type="PANTHER" id="PTHR12128:SF19">
    <property type="entry name" value="5-DEHYDRO-4-DEOXYGLUCARATE DEHYDRATASE 2-RELATED"/>
    <property type="match status" value="1"/>
</dbReference>
<dbReference type="PANTHER" id="PTHR12128">
    <property type="entry name" value="DIHYDRODIPICOLINATE SYNTHASE"/>
    <property type="match status" value="1"/>
</dbReference>
<dbReference type="Pfam" id="PF00701">
    <property type="entry name" value="DHDPS"/>
    <property type="match status" value="1"/>
</dbReference>
<dbReference type="PIRSF" id="PIRSF001365">
    <property type="entry name" value="DHDPS"/>
    <property type="match status" value="1"/>
</dbReference>
<dbReference type="PRINTS" id="PR00146">
    <property type="entry name" value="DHPICSNTHASE"/>
</dbReference>
<dbReference type="SMART" id="SM01130">
    <property type="entry name" value="DHDPS"/>
    <property type="match status" value="1"/>
</dbReference>
<dbReference type="SUPFAM" id="SSF51569">
    <property type="entry name" value="Aldolase"/>
    <property type="match status" value="1"/>
</dbReference>
<gene>
    <name type="ordered locus">Achl_0351</name>
</gene>
<organism>
    <name type="scientific">Pseudarthrobacter chlorophenolicus (strain ATCC 700700 / DSM 12829 / CIP 107037 / JCM 12360 / KCTC 9906 / NCIMB 13794 / A6)</name>
    <name type="common">Arthrobacter chlorophenolicus</name>
    <dbReference type="NCBI Taxonomy" id="452863"/>
    <lineage>
        <taxon>Bacteria</taxon>
        <taxon>Bacillati</taxon>
        <taxon>Actinomycetota</taxon>
        <taxon>Actinomycetes</taxon>
        <taxon>Micrococcales</taxon>
        <taxon>Micrococcaceae</taxon>
        <taxon>Pseudarthrobacter</taxon>
    </lineage>
</organism>
<feature type="chain" id="PRO_1000147906" description="Probable 5-dehydro-4-deoxyglucarate dehydratase">
    <location>
        <begin position="1"/>
        <end position="304"/>
    </location>
</feature>
<accession>B8H9W6</accession>
<keyword id="KW-0456">Lyase</keyword>
<comment type="catalytic activity">
    <reaction evidence="1">
        <text>5-dehydro-4-deoxy-D-glucarate + H(+) = 2,5-dioxopentanoate + CO2 + H2O</text>
        <dbReference type="Rhea" id="RHEA:24608"/>
        <dbReference type="ChEBI" id="CHEBI:15377"/>
        <dbReference type="ChEBI" id="CHEBI:15378"/>
        <dbReference type="ChEBI" id="CHEBI:16526"/>
        <dbReference type="ChEBI" id="CHEBI:42819"/>
        <dbReference type="ChEBI" id="CHEBI:58136"/>
        <dbReference type="EC" id="4.2.1.41"/>
    </reaction>
</comment>
<comment type="pathway">
    <text evidence="1">Carbohydrate acid metabolism; D-glucarate degradation; 2,5-dioxopentanoate from D-glucarate: step 2/2.</text>
</comment>
<comment type="similarity">
    <text evidence="1">Belongs to the DapA family.</text>
</comment>
<proteinExistence type="inferred from homology"/>
<name>KDGD_PSECP</name>
<reference key="1">
    <citation type="submission" date="2009-01" db="EMBL/GenBank/DDBJ databases">
        <title>Complete sequence of chromosome of Arthrobacter chlorophenolicus A6.</title>
        <authorList>
            <consortium name="US DOE Joint Genome Institute"/>
            <person name="Lucas S."/>
            <person name="Copeland A."/>
            <person name="Lapidus A."/>
            <person name="Glavina del Rio T."/>
            <person name="Tice H."/>
            <person name="Bruce D."/>
            <person name="Goodwin L."/>
            <person name="Pitluck S."/>
            <person name="Goltsman E."/>
            <person name="Clum A."/>
            <person name="Larimer F."/>
            <person name="Land M."/>
            <person name="Hauser L."/>
            <person name="Kyrpides N."/>
            <person name="Mikhailova N."/>
            <person name="Jansson J."/>
            <person name="Richardson P."/>
        </authorList>
    </citation>
    <scope>NUCLEOTIDE SEQUENCE [LARGE SCALE GENOMIC DNA]</scope>
    <source>
        <strain>ATCC 700700 / DSM 12829 / CIP 107037 / JCM 12360 / KCTC 9906 / NCIMB 13794 / A6</strain>
    </source>
</reference>
<sequence length="304" mass="32503">MAKYTPNELADTLKEGLLSFPVTSFDANLQFDEENYRKHLAWQASFPVAGLFAAGGTGEGFSLTPAESERVVRTAVDEVGSRVPVLASAGGSTAQAIENAKAAEAAGADGILLLPPYLTEADQAGLVEHVSAVCRATSLGVIIYNRANAIYKDTTVATLADRHANLIGFKDGVGDLEHDARVYAKLGDRLFYLGGLPTAETFALPLLQLGMSTYSSAMYNFVPQFALDFYQDVRNQDRAAVNKKLNDFVIPYLDIRDRVKGYSVSIVKGGLDAIGRSAGPVRTPLQNLAPQDLADLKALIATVS</sequence>